<sequence>MSRRFTVTSLPPAGPARSPDPESRRHSVADPRHLPGEDVKGDGNPKESSPFINSTDTEKGKEYDGKNMALFEEEMDTSPMVSSLLSGLANYTNLPQGSREHEEAENNEGGKKKPVQAPRMGTFMGVYLPCLQNIFGVILFLRLTWVVGIAGIMESFCMVFICCSCTMLTAISMSAIATNGVVPAGGSYYMISRSLGPEFGGAVGLCFYLGTTFAGAMYILGTIEILLAYLFPAMAIFKAEDASGEAAAMLNNMRVYGTCVLTCMATVVFVGVKYVNKFALVFLGCVILSILAIYAGVIKSAFDPPNFPICLLGNRTLSRHGFDVCAKLAWEGNETVTTRLWGLFCSSRFLNATCDEYFTRNNVTEIQGIPGAASGLIKENLWSSYLTKGVIVERSGMTSVGLADGTPIDMDHPYVFSDMTSYFTLLVGIYFPSVTGIMAGSNRSGDLRDAQKSIPTGTILAIATTSAVYISSVVLFGACIEGVVLRDKFGEAVNGNLVVGTLAWPSPWVIVIGSFFSTCGAGLQSLTGAPRLLQAISRDGIVPFLQVFGHGKANGEPTWALLLTACICEIGILIASLDEVAPILSMFFLMCYMFVNLACAVQTLLRTPNWRPRFRYYHWTLSFLGMSLCLALMFICSWYYALVAMLIAGLIYKYIEYRGAEKEWGDGIRGLSLSAARYALLRLEEGPPHTKNWRPQLLVLVRVDQDQNVVHPQLLSLTSQLKAGKGLTIVGSVLEGTFLENHPQAQRAEESIRRLMEAEKVKGFCQVVISSNLRDGVSHLIQSGGLGGLQHNTVLVGWPRNWRQKEDHQTWRNFIELVRETTAGHLALLVTKNVSMFPGNPERFSEGSIDVWWIVHDGGMLMLLPFLLRHHKVWRKCKMRIFTVAQMDDNSIQMKKDLTTFLYHLRITAEVEVVEMHESDISAYTYEKTLVMEQRSQILKQMHLTKNEREREIQSITDESRGSIRRKNPANTRLRLNVPEETAGDSEEKPEEEVQLIHDQSAPSCPSSSPSPGEEPEGEGETDPEKVHLTWTKDKSVAEKNKGPSPVSSEGIKDFFSMKPEWENLNQSNVRRMHTAVRLNEVIVKKSRDAKLVLLNMPGPPRNRNGDENYMEFLEVLTEHLDRVMLVRGGGREVITIYS</sequence>
<protein>
    <recommendedName>
        <fullName>Solute carrier family 12 member 5</fullName>
    </recommendedName>
    <alternativeName>
        <fullName>Electroneutral potassium-chloride cotransporter 2</fullName>
    </alternativeName>
    <alternativeName>
        <fullName evidence="17">K-Cl cotransporter 2</fullName>
        <shortName evidence="17">hKCC2</shortName>
    </alternativeName>
    <alternativeName>
        <fullName>Neuronal K-Cl cotransporter</fullName>
    </alternativeName>
</protein>
<dbReference type="EMBL" id="AF208159">
    <property type="protein sequence ID" value="AAG43493.1"/>
    <property type="molecule type" value="mRNA"/>
</dbReference>
<dbReference type="EMBL" id="AL162458">
    <property type="status" value="NOT_ANNOTATED_CDS"/>
    <property type="molecule type" value="Genomic_DNA"/>
</dbReference>
<dbReference type="EMBL" id="BC132668">
    <property type="protein sequence ID" value="AAI32669.1"/>
    <property type="molecule type" value="mRNA"/>
</dbReference>
<dbReference type="EMBL" id="BC132670">
    <property type="protein sequence ID" value="AAI32671.1"/>
    <property type="molecule type" value="mRNA"/>
</dbReference>
<dbReference type="EMBL" id="AB033002">
    <property type="protein sequence ID" value="BAA86490.1"/>
    <property type="molecule type" value="mRNA"/>
</dbReference>
<dbReference type="EMBL" id="DA102113">
    <property type="status" value="NOT_ANNOTATED_CDS"/>
    <property type="molecule type" value="mRNA"/>
</dbReference>
<dbReference type="EMBL" id="DA328785">
    <property type="status" value="NOT_ANNOTATED_CDS"/>
    <property type="molecule type" value="mRNA"/>
</dbReference>
<dbReference type="CCDS" id="CCDS13391.1">
    <molecule id="Q9H2X9-2"/>
</dbReference>
<dbReference type="CCDS" id="CCDS46610.1">
    <molecule id="Q9H2X9-1"/>
</dbReference>
<dbReference type="RefSeq" id="NP_001128243.1">
    <molecule id="Q9H2X9-1"/>
    <property type="nucleotide sequence ID" value="NM_001134771.2"/>
</dbReference>
<dbReference type="RefSeq" id="NP_065759.1">
    <molecule id="Q9H2X9-2"/>
    <property type="nucleotide sequence ID" value="NM_020708.5"/>
</dbReference>
<dbReference type="PDB" id="6M23">
    <property type="method" value="EM"/>
    <property type="resolution" value="3.20 A"/>
    <property type="chains" value="A/B=26-1139"/>
</dbReference>
<dbReference type="PDB" id="7D8Z">
    <property type="method" value="EM"/>
    <property type="resolution" value="3.40 A"/>
    <property type="chains" value="A/B=1-1139"/>
</dbReference>
<dbReference type="PDBsum" id="6M23"/>
<dbReference type="PDBsum" id="7D8Z"/>
<dbReference type="EMDB" id="EMD-30061"/>
<dbReference type="EMDB" id="EMD-30615"/>
<dbReference type="SMR" id="Q9H2X9"/>
<dbReference type="BioGRID" id="121538">
    <property type="interactions" value="6"/>
</dbReference>
<dbReference type="FunCoup" id="Q9H2X9">
    <property type="interactions" value="916"/>
</dbReference>
<dbReference type="IntAct" id="Q9H2X9">
    <property type="interactions" value="8"/>
</dbReference>
<dbReference type="MINT" id="Q9H2X9"/>
<dbReference type="STRING" id="9606.ENSP00000387694"/>
<dbReference type="BindingDB" id="Q9H2X9"/>
<dbReference type="ChEMBL" id="CHEMBL1615384"/>
<dbReference type="DrugBank" id="DB00887">
    <property type="generic name" value="Bumetanide"/>
</dbReference>
<dbReference type="DrugBank" id="DB00761">
    <property type="generic name" value="Potassium chloride"/>
</dbReference>
<dbReference type="GuidetoPHARMACOLOGY" id="972"/>
<dbReference type="TCDB" id="2.A.30.1.18">
    <property type="family name" value="the cation-chloride cotransporter (ccc) family"/>
</dbReference>
<dbReference type="GlyCosmos" id="Q9H2X9">
    <property type="glycosylation" value="2 sites, No reported glycans"/>
</dbReference>
<dbReference type="GlyGen" id="Q9H2X9">
    <property type="glycosylation" value="4 sites, 3 N-linked glycans (2 sites)"/>
</dbReference>
<dbReference type="iPTMnet" id="Q9H2X9"/>
<dbReference type="PhosphoSitePlus" id="Q9H2X9"/>
<dbReference type="SwissPalm" id="Q9H2X9"/>
<dbReference type="BioMuta" id="SLC12A5"/>
<dbReference type="DMDM" id="161784306"/>
<dbReference type="jPOST" id="Q9H2X9"/>
<dbReference type="MassIVE" id="Q9H2X9"/>
<dbReference type="PaxDb" id="9606-ENSP00000387694"/>
<dbReference type="PeptideAtlas" id="Q9H2X9"/>
<dbReference type="ProteomicsDB" id="80632">
    <molecule id="Q9H2X9-1"/>
</dbReference>
<dbReference type="ProteomicsDB" id="80633">
    <molecule id="Q9H2X9-2"/>
</dbReference>
<dbReference type="ABCD" id="Q9H2X9">
    <property type="antibodies" value="1 sequenced antibody"/>
</dbReference>
<dbReference type="Antibodypedia" id="1580">
    <property type="antibodies" value="321 antibodies from 29 providers"/>
</dbReference>
<dbReference type="DNASU" id="57468"/>
<dbReference type="Ensembl" id="ENST00000243964.7">
    <molecule id="Q9H2X9-2"/>
    <property type="protein sequence ID" value="ENSP00000243964.4"/>
    <property type="gene ID" value="ENSG00000124140.15"/>
</dbReference>
<dbReference type="Ensembl" id="ENST00000454036.6">
    <molecule id="Q9H2X9-1"/>
    <property type="protein sequence ID" value="ENSP00000387694.1"/>
    <property type="gene ID" value="ENSG00000124140.15"/>
</dbReference>
<dbReference type="GeneID" id="57468"/>
<dbReference type="KEGG" id="hsa:57468"/>
<dbReference type="MANE-Select" id="ENST00000243964.7">
    <molecule id="Q9H2X9-2"/>
    <property type="protein sequence ID" value="ENSP00000243964.4"/>
    <property type="RefSeq nucleotide sequence ID" value="NM_020708.5"/>
    <property type="RefSeq protein sequence ID" value="NP_065759.1"/>
</dbReference>
<dbReference type="UCSC" id="uc002xrb.3">
    <molecule id="Q9H2X9-1"/>
    <property type="organism name" value="human"/>
</dbReference>
<dbReference type="AGR" id="HGNC:13818"/>
<dbReference type="CTD" id="57468"/>
<dbReference type="DisGeNET" id="57468"/>
<dbReference type="GeneCards" id="SLC12A5"/>
<dbReference type="GeneReviews" id="SLC12A5"/>
<dbReference type="HGNC" id="HGNC:13818">
    <property type="gene designation" value="SLC12A5"/>
</dbReference>
<dbReference type="HPA" id="ENSG00000124140">
    <property type="expression patterns" value="Tissue enhanced (brain, retina)"/>
</dbReference>
<dbReference type="MalaCards" id="SLC12A5"/>
<dbReference type="MIM" id="606726">
    <property type="type" value="gene"/>
</dbReference>
<dbReference type="MIM" id="616645">
    <property type="type" value="phenotype"/>
</dbReference>
<dbReference type="MIM" id="616685">
    <property type="type" value="phenotype"/>
</dbReference>
<dbReference type="neXtProt" id="NX_Q9H2X9"/>
<dbReference type="OpenTargets" id="ENSG00000124140"/>
<dbReference type="Orphanet" id="293181">
    <property type="disease" value="Epilepsy of infancy with migrating focal seizures"/>
</dbReference>
<dbReference type="PharmGKB" id="PA37814"/>
<dbReference type="VEuPathDB" id="HostDB:ENSG00000124140"/>
<dbReference type="eggNOG" id="KOG2082">
    <property type="taxonomic scope" value="Eukaryota"/>
</dbReference>
<dbReference type="GeneTree" id="ENSGT00940000160827"/>
<dbReference type="HOGENOM" id="CLU_001883_1_2_1"/>
<dbReference type="InParanoid" id="Q9H2X9"/>
<dbReference type="OMA" id="LRIDAMI"/>
<dbReference type="OrthoDB" id="2020542at2759"/>
<dbReference type="PAN-GO" id="Q9H2X9">
    <property type="GO annotations" value="8 GO annotations based on evolutionary models"/>
</dbReference>
<dbReference type="PhylomeDB" id="Q9H2X9"/>
<dbReference type="TreeFam" id="TF313657"/>
<dbReference type="PathwayCommons" id="Q9H2X9"/>
<dbReference type="Reactome" id="R-HSA-426117">
    <property type="pathway name" value="Cation-coupled Chloride cotransporters"/>
</dbReference>
<dbReference type="SignaLink" id="Q9H2X9"/>
<dbReference type="SIGNOR" id="Q9H2X9"/>
<dbReference type="BioGRID-ORCS" id="57468">
    <property type="hits" value="22 hits in 1161 CRISPR screens"/>
</dbReference>
<dbReference type="CD-CODE" id="FB4E32DD">
    <property type="entry name" value="Presynaptic clusters and postsynaptic densities"/>
</dbReference>
<dbReference type="GeneWiki" id="Chloride_potassium_symporter_5"/>
<dbReference type="GenomeRNAi" id="57468"/>
<dbReference type="Pharos" id="Q9H2X9">
    <property type="development level" value="Tchem"/>
</dbReference>
<dbReference type="PRO" id="PR:Q9H2X9"/>
<dbReference type="Proteomes" id="UP000005640">
    <property type="component" value="Chromosome 20"/>
</dbReference>
<dbReference type="RNAct" id="Q9H2X9">
    <property type="molecule type" value="protein"/>
</dbReference>
<dbReference type="Bgee" id="ENSG00000124140">
    <property type="expression patterns" value="Expressed in right hemisphere of cerebellum and 132 other cell types or tissues"/>
</dbReference>
<dbReference type="ExpressionAtlas" id="Q9H2X9">
    <property type="expression patterns" value="baseline and differential"/>
</dbReference>
<dbReference type="GO" id="GO:0071944">
    <property type="term" value="C:cell periphery"/>
    <property type="evidence" value="ECO:0000314"/>
    <property type="project" value="ARUK-UCL"/>
</dbReference>
<dbReference type="GO" id="GO:0032590">
    <property type="term" value="C:dendrite membrane"/>
    <property type="evidence" value="ECO:0007669"/>
    <property type="project" value="Ensembl"/>
</dbReference>
<dbReference type="GO" id="GO:0098978">
    <property type="term" value="C:glutamatergic synapse"/>
    <property type="evidence" value="ECO:0007669"/>
    <property type="project" value="Ensembl"/>
</dbReference>
<dbReference type="GO" id="GO:0016020">
    <property type="term" value="C:membrane"/>
    <property type="evidence" value="ECO:0000314"/>
    <property type="project" value="UniProtKB"/>
</dbReference>
<dbReference type="GO" id="GO:0043005">
    <property type="term" value="C:neuron projection"/>
    <property type="evidence" value="ECO:0000314"/>
    <property type="project" value="ARUK-UCL"/>
</dbReference>
<dbReference type="GO" id="GO:0043025">
    <property type="term" value="C:neuronal cell body"/>
    <property type="evidence" value="ECO:0000314"/>
    <property type="project" value="ARUK-UCL"/>
</dbReference>
<dbReference type="GO" id="GO:0043204">
    <property type="term" value="C:perikaryon"/>
    <property type="evidence" value="ECO:0007669"/>
    <property type="project" value="Ensembl"/>
</dbReference>
<dbReference type="GO" id="GO:0005886">
    <property type="term" value="C:plasma membrane"/>
    <property type="evidence" value="ECO:0000318"/>
    <property type="project" value="GO_Central"/>
</dbReference>
<dbReference type="GO" id="GO:0099634">
    <property type="term" value="C:postsynaptic specialization membrane"/>
    <property type="evidence" value="ECO:0007669"/>
    <property type="project" value="Ensembl"/>
</dbReference>
<dbReference type="GO" id="GO:0008519">
    <property type="term" value="F:ammonium channel activity"/>
    <property type="evidence" value="ECO:0007669"/>
    <property type="project" value="Ensembl"/>
</dbReference>
<dbReference type="GO" id="GO:0015108">
    <property type="term" value="F:chloride transmembrane transporter activity"/>
    <property type="evidence" value="ECO:0000314"/>
    <property type="project" value="UniProtKB"/>
</dbReference>
<dbReference type="GO" id="GO:0046872">
    <property type="term" value="F:metal ion binding"/>
    <property type="evidence" value="ECO:0007669"/>
    <property type="project" value="UniProtKB-KW"/>
</dbReference>
<dbReference type="GO" id="GO:0015379">
    <property type="term" value="F:potassium:chloride symporter activity"/>
    <property type="evidence" value="ECO:0000314"/>
    <property type="project" value="UniProtKB"/>
</dbReference>
<dbReference type="GO" id="GO:0019901">
    <property type="term" value="F:protein kinase binding"/>
    <property type="evidence" value="ECO:0000353"/>
    <property type="project" value="ParkinsonsUK-UCL"/>
</dbReference>
<dbReference type="GO" id="GO:0006884">
    <property type="term" value="P:cell volume homeostasis"/>
    <property type="evidence" value="ECO:0000318"/>
    <property type="project" value="GO_Central"/>
</dbReference>
<dbReference type="GO" id="GO:0007268">
    <property type="term" value="P:chemical synaptic transmission"/>
    <property type="evidence" value="ECO:0000318"/>
    <property type="project" value="GO_Central"/>
</dbReference>
<dbReference type="GO" id="GO:0055064">
    <property type="term" value="P:chloride ion homeostasis"/>
    <property type="evidence" value="ECO:0000318"/>
    <property type="project" value="GO_Central"/>
</dbReference>
<dbReference type="GO" id="GO:1902476">
    <property type="term" value="P:chloride transmembrane transport"/>
    <property type="evidence" value="ECO:0000318"/>
    <property type="project" value="GO_Central"/>
</dbReference>
<dbReference type="GO" id="GO:0060996">
    <property type="term" value="P:dendritic spine development"/>
    <property type="evidence" value="ECO:0000314"/>
    <property type="project" value="UniProtKB"/>
</dbReference>
<dbReference type="GO" id="GO:0006971">
    <property type="term" value="P:hypotonic response"/>
    <property type="evidence" value="ECO:0000314"/>
    <property type="project" value="UniProtKB"/>
</dbReference>
<dbReference type="GO" id="GO:0030644">
    <property type="term" value="P:intracellular chloride ion homeostasis"/>
    <property type="evidence" value="ECO:0000314"/>
    <property type="project" value="UniProtKB"/>
</dbReference>
<dbReference type="GO" id="GO:0051452">
    <property type="term" value="P:intracellular pH reduction"/>
    <property type="evidence" value="ECO:0007669"/>
    <property type="project" value="Ensembl"/>
</dbReference>
<dbReference type="GO" id="GO:0007612">
    <property type="term" value="P:learning"/>
    <property type="evidence" value="ECO:0007669"/>
    <property type="project" value="Ensembl"/>
</dbReference>
<dbReference type="GO" id="GO:0006811">
    <property type="term" value="P:monoatomic ion transport"/>
    <property type="evidence" value="ECO:0000314"/>
    <property type="project" value="UniProtKB"/>
</dbReference>
<dbReference type="GO" id="GO:0035264">
    <property type="term" value="P:multicellular organism growth"/>
    <property type="evidence" value="ECO:0007669"/>
    <property type="project" value="Ensembl"/>
</dbReference>
<dbReference type="GO" id="GO:0098970">
    <property type="term" value="P:postsynaptic neurotransmitter receptor diffusion trapping"/>
    <property type="evidence" value="ECO:0007669"/>
    <property type="project" value="Ensembl"/>
</dbReference>
<dbReference type="GO" id="GO:0055075">
    <property type="term" value="P:potassium ion homeostasis"/>
    <property type="evidence" value="ECO:0000318"/>
    <property type="project" value="GO_Central"/>
</dbReference>
<dbReference type="GO" id="GO:1990573">
    <property type="term" value="P:potassium ion import across plasma membrane"/>
    <property type="evidence" value="ECO:0000318"/>
    <property type="project" value="GO_Central"/>
</dbReference>
<dbReference type="GO" id="GO:0150052">
    <property type="term" value="P:regulation of postsynapse assembly"/>
    <property type="evidence" value="ECO:0007669"/>
    <property type="project" value="Ensembl"/>
</dbReference>
<dbReference type="GO" id="GO:0009410">
    <property type="term" value="P:response to xenobiotic stimulus"/>
    <property type="evidence" value="ECO:0007669"/>
    <property type="project" value="Ensembl"/>
</dbReference>
<dbReference type="GO" id="GO:0040040">
    <property type="term" value="P:thermosensory behavior"/>
    <property type="evidence" value="ECO:0007669"/>
    <property type="project" value="Ensembl"/>
</dbReference>
<dbReference type="FunFam" id="1.20.1740.10:FF:000040">
    <property type="entry name" value="Solute carrier family 12 member 6"/>
    <property type="match status" value="1"/>
</dbReference>
<dbReference type="FunFam" id="1.20.1740.10:FF:000123">
    <property type="entry name" value="Uncharacterized protein"/>
    <property type="match status" value="1"/>
</dbReference>
<dbReference type="Gene3D" id="1.20.1740.10">
    <property type="entry name" value="Amino acid/polyamine transporter I"/>
    <property type="match status" value="1"/>
</dbReference>
<dbReference type="InterPro" id="IPR004841">
    <property type="entry name" value="AA-permease/SLC12A_dom"/>
</dbReference>
<dbReference type="InterPro" id="IPR000076">
    <property type="entry name" value="KCL_cotranspt"/>
</dbReference>
<dbReference type="InterPro" id="IPR018491">
    <property type="entry name" value="SLC12_C"/>
</dbReference>
<dbReference type="InterPro" id="IPR004842">
    <property type="entry name" value="SLC12A_fam"/>
</dbReference>
<dbReference type="NCBIfam" id="TIGR00930">
    <property type="entry name" value="2a30"/>
    <property type="match status" value="1"/>
</dbReference>
<dbReference type="PANTHER" id="PTHR11827:SF54">
    <property type="entry name" value="SOLUTE CARRIER FAMILY 12 MEMBER 5"/>
    <property type="match status" value="1"/>
</dbReference>
<dbReference type="PANTHER" id="PTHR11827">
    <property type="entry name" value="SOLUTE CARRIER FAMILY 12, CATION COTRANSPORTERS"/>
    <property type="match status" value="1"/>
</dbReference>
<dbReference type="Pfam" id="PF00324">
    <property type="entry name" value="AA_permease"/>
    <property type="match status" value="2"/>
</dbReference>
<dbReference type="Pfam" id="PF03522">
    <property type="entry name" value="SLC12"/>
    <property type="match status" value="3"/>
</dbReference>
<dbReference type="PRINTS" id="PR01081">
    <property type="entry name" value="KCLTRNSPORT"/>
</dbReference>
<organism>
    <name type="scientific">Homo sapiens</name>
    <name type="common">Human</name>
    <dbReference type="NCBI Taxonomy" id="9606"/>
    <lineage>
        <taxon>Eukaryota</taxon>
        <taxon>Metazoa</taxon>
        <taxon>Chordata</taxon>
        <taxon>Craniata</taxon>
        <taxon>Vertebrata</taxon>
        <taxon>Euteleostomi</taxon>
        <taxon>Mammalia</taxon>
        <taxon>Eutheria</taxon>
        <taxon>Euarchontoglires</taxon>
        <taxon>Primates</taxon>
        <taxon>Haplorrhini</taxon>
        <taxon>Catarrhini</taxon>
        <taxon>Hominidae</taxon>
        <taxon>Homo</taxon>
    </lineage>
</organism>
<keyword id="KW-0002">3D-structure</keyword>
<keyword id="KW-0025">Alternative splicing</keyword>
<keyword id="KW-1003">Cell membrane</keyword>
<keyword id="KW-0966">Cell projection</keyword>
<keyword id="KW-0868">Chloride</keyword>
<keyword id="KW-0225">Disease variant</keyword>
<keyword id="KW-1015">Disulfide bond</keyword>
<keyword id="KW-0887">Epilepsy</keyword>
<keyword id="KW-0325">Glycoprotein</keyword>
<keyword id="KW-0406">Ion transport</keyword>
<keyword id="KW-0472">Membrane</keyword>
<keyword id="KW-0479">Metal-binding</keyword>
<keyword id="KW-0597">Phosphoprotein</keyword>
<keyword id="KW-0630">Potassium</keyword>
<keyword id="KW-0633">Potassium transport</keyword>
<keyword id="KW-1267">Proteomics identification</keyword>
<keyword id="KW-1185">Reference proteome</keyword>
<keyword id="KW-0769">Symport</keyword>
<keyword id="KW-0812">Transmembrane</keyword>
<keyword id="KW-1133">Transmembrane helix</keyword>
<keyword id="KW-0813">Transport</keyword>
<gene>
    <name evidence="20" type="primary">SLC12A5</name>
    <name evidence="17" type="synonym">KCC2</name>
    <name type="synonym">KIAA1176</name>
</gene>
<reference key="1">
    <citation type="journal article" date="2002" name="Brain Res. Mol. Brain Res.">
        <title>Molecular, functional, and genomic characterization of human KCC2, the neuronal K-Cl cotransporter.</title>
        <authorList>
            <person name="Song L."/>
            <person name="Mercado A."/>
            <person name="Vazquez N."/>
            <person name="Xie Q."/>
            <person name="Desai R."/>
            <person name="George A.L. Jr."/>
            <person name="Gamba G."/>
            <person name="Mount D.B."/>
        </authorList>
    </citation>
    <scope>NUCLEOTIDE SEQUENCE [MRNA] (ISOFORM 2)</scope>
    <scope>TRANSPORTER ACTIVITY</scope>
    <scope>FUNCTION</scope>
    <scope>BIOPHYSICOCHEMICAL PROPERTIES</scope>
    <scope>TISSUE SPECIFICITY</scope>
    <scope>SUBCELLULAR LOCATION</scope>
    <source>
        <tissue>Brain</tissue>
    </source>
</reference>
<reference key="2">
    <citation type="journal article" date="2001" name="Nature">
        <title>The DNA sequence and comparative analysis of human chromosome 20.</title>
        <authorList>
            <person name="Deloukas P."/>
            <person name="Matthews L.H."/>
            <person name="Ashurst J.L."/>
            <person name="Burton J."/>
            <person name="Gilbert J.G.R."/>
            <person name="Jones M."/>
            <person name="Stavrides G."/>
            <person name="Almeida J.P."/>
            <person name="Babbage A.K."/>
            <person name="Bagguley C.L."/>
            <person name="Bailey J."/>
            <person name="Barlow K.F."/>
            <person name="Bates K.N."/>
            <person name="Beard L.M."/>
            <person name="Beare D.M."/>
            <person name="Beasley O.P."/>
            <person name="Bird C.P."/>
            <person name="Blakey S.E."/>
            <person name="Bridgeman A.M."/>
            <person name="Brown A.J."/>
            <person name="Buck D."/>
            <person name="Burrill W.D."/>
            <person name="Butler A.P."/>
            <person name="Carder C."/>
            <person name="Carter N.P."/>
            <person name="Chapman J.C."/>
            <person name="Clamp M."/>
            <person name="Clark G."/>
            <person name="Clark L.N."/>
            <person name="Clark S.Y."/>
            <person name="Clee C.M."/>
            <person name="Clegg S."/>
            <person name="Cobley V.E."/>
            <person name="Collier R.E."/>
            <person name="Connor R.E."/>
            <person name="Corby N.R."/>
            <person name="Coulson A."/>
            <person name="Coville G.J."/>
            <person name="Deadman R."/>
            <person name="Dhami P.D."/>
            <person name="Dunn M."/>
            <person name="Ellington A.G."/>
            <person name="Frankland J.A."/>
            <person name="Fraser A."/>
            <person name="French L."/>
            <person name="Garner P."/>
            <person name="Grafham D.V."/>
            <person name="Griffiths C."/>
            <person name="Griffiths M.N.D."/>
            <person name="Gwilliam R."/>
            <person name="Hall R.E."/>
            <person name="Hammond S."/>
            <person name="Harley J.L."/>
            <person name="Heath P.D."/>
            <person name="Ho S."/>
            <person name="Holden J.L."/>
            <person name="Howden P.J."/>
            <person name="Huckle E."/>
            <person name="Hunt A.R."/>
            <person name="Hunt S.E."/>
            <person name="Jekosch K."/>
            <person name="Johnson C.M."/>
            <person name="Johnson D."/>
            <person name="Kay M.P."/>
            <person name="Kimberley A.M."/>
            <person name="King A."/>
            <person name="Knights A."/>
            <person name="Laird G.K."/>
            <person name="Lawlor S."/>
            <person name="Lehvaeslaiho M.H."/>
            <person name="Leversha M.A."/>
            <person name="Lloyd C."/>
            <person name="Lloyd D.M."/>
            <person name="Lovell J.D."/>
            <person name="Marsh V.L."/>
            <person name="Martin S.L."/>
            <person name="McConnachie L.J."/>
            <person name="McLay K."/>
            <person name="McMurray A.A."/>
            <person name="Milne S.A."/>
            <person name="Mistry D."/>
            <person name="Moore M.J.F."/>
            <person name="Mullikin J.C."/>
            <person name="Nickerson T."/>
            <person name="Oliver K."/>
            <person name="Parker A."/>
            <person name="Patel R."/>
            <person name="Pearce T.A.V."/>
            <person name="Peck A.I."/>
            <person name="Phillimore B.J.C.T."/>
            <person name="Prathalingam S.R."/>
            <person name="Plumb R.W."/>
            <person name="Ramsay H."/>
            <person name="Rice C.M."/>
            <person name="Ross M.T."/>
            <person name="Scott C.E."/>
            <person name="Sehra H.K."/>
            <person name="Shownkeen R."/>
            <person name="Sims S."/>
            <person name="Skuce C.D."/>
            <person name="Smith M.L."/>
            <person name="Soderlund C."/>
            <person name="Steward C.A."/>
            <person name="Sulston J.E."/>
            <person name="Swann R.M."/>
            <person name="Sycamore N."/>
            <person name="Taylor R."/>
            <person name="Tee L."/>
            <person name="Thomas D.W."/>
            <person name="Thorpe A."/>
            <person name="Tracey A."/>
            <person name="Tromans A.C."/>
            <person name="Vaudin M."/>
            <person name="Wall M."/>
            <person name="Wallis J.M."/>
            <person name="Whitehead S.L."/>
            <person name="Whittaker P."/>
            <person name="Willey D.L."/>
            <person name="Williams L."/>
            <person name="Williams S.A."/>
            <person name="Wilming L."/>
            <person name="Wray P.W."/>
            <person name="Hubbard T."/>
            <person name="Durbin R.M."/>
            <person name="Bentley D.R."/>
            <person name="Beck S."/>
            <person name="Rogers J."/>
        </authorList>
    </citation>
    <scope>NUCLEOTIDE SEQUENCE [LARGE SCALE GENOMIC DNA]</scope>
</reference>
<reference key="3">
    <citation type="journal article" date="2004" name="Genome Res.">
        <title>The status, quality, and expansion of the NIH full-length cDNA project: the Mammalian Gene Collection (MGC).</title>
        <authorList>
            <consortium name="The MGC Project Team"/>
        </authorList>
    </citation>
    <scope>NUCLEOTIDE SEQUENCE [LARGE SCALE MRNA] (ISOFORM 2)</scope>
</reference>
<reference key="4">
    <citation type="journal article" date="2006" name="Genome Res.">
        <title>Diversification of transcriptional modulation: large-scale identification and characterization of putative alternative promoters of human genes.</title>
        <authorList>
            <person name="Kimura K."/>
            <person name="Wakamatsu A."/>
            <person name="Suzuki Y."/>
            <person name="Ota T."/>
            <person name="Nishikawa T."/>
            <person name="Yamashita R."/>
            <person name="Yamamoto J."/>
            <person name="Sekine M."/>
            <person name="Tsuritani K."/>
            <person name="Wakaguri H."/>
            <person name="Ishii S."/>
            <person name="Sugiyama T."/>
            <person name="Saito K."/>
            <person name="Isono Y."/>
            <person name="Irie R."/>
            <person name="Kushida N."/>
            <person name="Yoneyama T."/>
            <person name="Otsuka R."/>
            <person name="Kanda K."/>
            <person name="Yokoi T."/>
            <person name="Kondo H."/>
            <person name="Wagatsuma M."/>
            <person name="Murakawa K."/>
            <person name="Ishida S."/>
            <person name="Ishibashi T."/>
            <person name="Takahashi-Fujii A."/>
            <person name="Tanase T."/>
            <person name="Nagai K."/>
            <person name="Kikuchi H."/>
            <person name="Nakai K."/>
            <person name="Isogai T."/>
            <person name="Sugano S."/>
        </authorList>
    </citation>
    <scope>NUCLEOTIDE SEQUENCE [LARGE SCALE MRNA] OF 1-175 (ISOFORM 1)</scope>
</reference>
<reference key="5">
    <citation type="journal article" date="1999" name="DNA Res.">
        <title>Characterization of cDNA clones selected by the GeneMark analysis from size-fractionated cDNA libraries from human brain.</title>
        <authorList>
            <person name="Hirosawa M."/>
            <person name="Nagase T."/>
            <person name="Ishikawa K."/>
            <person name="Kikuno R."/>
            <person name="Nomura N."/>
            <person name="Ohara O."/>
        </authorList>
    </citation>
    <scope>NUCLEOTIDE SEQUENCE [LARGE SCALE MRNA] OF 9-1109 (ISOFORM 2)</scope>
    <scope>VARIANT LEU-1100</scope>
    <source>
        <tissue>Brain</tissue>
    </source>
</reference>
<reference key="6">
    <citation type="journal article" date="2009" name="Cell">
        <title>Sites of regulated phosphorylation that control K-Cl cotransporter activity.</title>
        <authorList>
            <person name="Rinehart J."/>
            <person name="Maksimova Y.D."/>
            <person name="Tanis J.E."/>
            <person name="Stone K.L."/>
            <person name="Hodson C.A."/>
            <person name="Zhang J."/>
            <person name="Risinger M."/>
            <person name="Pan W."/>
            <person name="Wu D."/>
            <person name="Colangelo C.M."/>
            <person name="Forbush B."/>
            <person name="Joiner C.H."/>
            <person name="Gulcicek E.E."/>
            <person name="Gallagher P.G."/>
            <person name="Lifton R.P."/>
        </authorList>
    </citation>
    <scope>ACTIVITY REGULATION</scope>
    <scope>PHOSPHORYLATION AT THR-929 AND THR-1030</scope>
    <scope>MUTAGENESIS OF THR-929 AND THR-1030</scope>
</reference>
<reference key="7">
    <citation type="journal article" date="2011" name="Am. J. Physiol.">
        <title>Similar Effects of all WNK3 Variants upon SLC12 Cotransporters.</title>
        <authorList>
            <person name="Cruz-Rangel S."/>
            <person name="Melo Z."/>
            <person name="Vazquez N."/>
            <person name="Meade P."/>
            <person name="Bobadilla N.A."/>
            <person name="Pasantes-Morales H."/>
            <person name="Gamba G."/>
            <person name="Mercado A."/>
        </authorList>
    </citation>
    <scope>ACTIVITY REGULATION</scope>
</reference>
<reference evidence="22" key="8">
    <citation type="journal article" date="2020" name="Sci. Adv.">
        <title>Structures and an activation mechanism of human potassium-chloride cotransporters.</title>
        <authorList>
            <person name="Xie Y."/>
            <person name="Chang S."/>
            <person name="Zhao C."/>
            <person name="Wang F."/>
            <person name="Liu S."/>
            <person name="Wang J."/>
            <person name="Delpire E."/>
            <person name="Ye S."/>
            <person name="Guo J."/>
        </authorList>
    </citation>
    <scope>STRUCTURE BY ELECTRON MICROSCOPY (3.40 ANGSTROMS) OF 81-1135 OF ISOFORM 1</scope>
    <scope>SUBUNIT</scope>
    <scope>DISULFIDE BONDS</scope>
    <scope>MUTAGENESIS OF TYR-91; THR-92; ASN-93; LEU-94; GLN-96; HIS-101; GLU-102 AND GLU-105</scope>
</reference>
<reference evidence="21" key="9">
    <citation type="journal article" date="2021" name="Cell Res.">
        <title>Cryo-EM structures of the full-length human KCC2 and KCC3 cation-chloride cotransporters.</title>
        <authorList>
            <person name="Chi X."/>
            <person name="Li X."/>
            <person name="Chen Y."/>
            <person name="Zhang Y."/>
            <person name="Su Q."/>
            <person name="Zhou Q."/>
        </authorList>
    </citation>
    <scope>STRUCTURE BY ELECTRON MICROSCOPY (3.20 ANGSTROMS) OF 85-1116 IN COMPLEX WITH POTASSIUM AND CHLORIDE</scope>
    <scope>SUBUNIT</scope>
    <scope>DISULFIDE BOND</scope>
</reference>
<reference key="10">
    <citation type="journal article" date="2021" name="Cell Res.">
        <title>Author Correction: Cryo-EM structures of the full-length human KCC2 and KCC3 cation-chloride cotransporters.</title>
        <authorList>
            <person name="Chi X."/>
            <person name="Li X."/>
            <person name="Chen Y."/>
            <person name="Zhang Y."/>
            <person name="Su Q."/>
            <person name="Zhou Q."/>
        </authorList>
    </citation>
    <scope>ERRATUM OF PUBMED:33199848</scope>
</reference>
<reference key="11">
    <citation type="journal article" date="2014" name="EMBO Rep.">
        <title>A variant of KCC2 from patients with febrile seizures impairs neuronal Cl- extrusion and dendritic spine formation.</title>
        <authorList>
            <person name="Puskarjov M."/>
            <person name="Seja P."/>
            <person name="Heron S.E."/>
            <person name="Williams T.C."/>
            <person name="Ahmad F."/>
            <person name="Iona X."/>
            <person name="Oliver K.L."/>
            <person name="Grinton B.E."/>
            <person name="Vutskits L."/>
            <person name="Scheffer I.E."/>
            <person name="Petrou S."/>
            <person name="Blaesse P."/>
            <person name="Dibbens L.M."/>
            <person name="Berkovic S.F."/>
            <person name="Kaila K."/>
        </authorList>
    </citation>
    <scope>FUNCTION</scope>
    <scope>INVOLVEMENT IN EIG14</scope>
    <scope>VARIANT EIG14 HIS-975</scope>
    <scope>CHARACTERIZATION OF VARIANT EIG14 HIS-975</scope>
</reference>
<reference key="12">
    <citation type="journal article" date="2015" name="Nat. Commun.">
        <title>Mutations in SLC12A5 in epilepsy of infancy with migrating focal seizures.</title>
        <authorList>
            <person name="Stoedberg T."/>
            <person name="McTague A."/>
            <person name="Ruiz A.J."/>
            <person name="Hirata H."/>
            <person name="Zhen J."/>
            <person name="Long P."/>
            <person name="Farabella I."/>
            <person name="Meyer E."/>
            <person name="Kawahara A."/>
            <person name="Vassallo G."/>
            <person name="Stivaros S.M."/>
            <person name="Bjursell M.K."/>
            <person name="Stranneheim H."/>
            <person name="Tigerschioeld S."/>
            <person name="Persson B."/>
            <person name="Bangash I."/>
            <person name="Das K."/>
            <person name="Hughes D."/>
            <person name="Lesko N."/>
            <person name="Lundeberg J."/>
            <person name="Scott R.C."/>
            <person name="Poduri A."/>
            <person name="Scheffer I.E."/>
            <person name="Smith H."/>
            <person name="Gissen P."/>
            <person name="Schorge S."/>
            <person name="Reith M.E."/>
            <person name="Topf M."/>
            <person name="Kullmann D.M."/>
            <person name="Harvey R.J."/>
            <person name="Wedell A."/>
            <person name="Kurian M.A."/>
        </authorList>
    </citation>
    <scope>INVOLVEMENT IN DEE34</scope>
    <scope>VARIANTS DEE34 HIS-311; PRO-426 AND ASP-551</scope>
    <scope>CHARACTERIZATION OF VARIANTS DEE34 HIS-311; PRO-426 AND ASP-551</scope>
</reference>
<reference key="13">
    <citation type="journal article" date="2006" name="Science">
        <title>The consensus coding sequences of human breast and colorectal cancers.</title>
        <authorList>
            <person name="Sjoeblom T."/>
            <person name="Jones S."/>
            <person name="Wood L.D."/>
            <person name="Parsons D.W."/>
            <person name="Lin J."/>
            <person name="Barber T.D."/>
            <person name="Mandelker D."/>
            <person name="Leary R.J."/>
            <person name="Ptak J."/>
            <person name="Silliman N."/>
            <person name="Szabo S."/>
            <person name="Buckhaults P."/>
            <person name="Farrell C."/>
            <person name="Meeh P."/>
            <person name="Markowitz S.D."/>
            <person name="Willis J."/>
            <person name="Dawson D."/>
            <person name="Willson J.K.V."/>
            <person name="Gazdar A.F."/>
            <person name="Hartigan J."/>
            <person name="Wu L."/>
            <person name="Liu C."/>
            <person name="Parmigiani G."/>
            <person name="Park B.H."/>
            <person name="Bachman K.E."/>
            <person name="Papadopoulos N."/>
            <person name="Vogelstein B."/>
            <person name="Kinzler K.W."/>
            <person name="Velculescu V.E."/>
        </authorList>
    </citation>
    <scope>VARIANT [LARGE SCALE ANALYSIS] ASP-847</scope>
</reference>
<reference key="14">
    <citation type="journal article" date="2014" name="EMBO Rep.">
        <title>Genetically encoded impairment of neuronal KCC2 cotransporter function in human idiopathic generalized epilepsy.</title>
        <authorList>
            <person name="Kahle K.T."/>
            <person name="Merner N.D."/>
            <person name="Friedel P."/>
            <person name="Silayeva L."/>
            <person name="Liang B."/>
            <person name="Khanna A."/>
            <person name="Shang Y."/>
            <person name="Lachance-Touchette P."/>
            <person name="Bourassa C."/>
            <person name="Levert A."/>
            <person name="Dion P.A."/>
            <person name="Walcott B."/>
            <person name="Spiegelman D."/>
            <person name="Dionne-Laporte A."/>
            <person name="Hodgkinson A."/>
            <person name="Awadalla P."/>
            <person name="Nikbakht H."/>
            <person name="Majewski J."/>
            <person name="Cossette P."/>
            <person name="Deeb T.Z."/>
            <person name="Moss S.J."/>
            <person name="Medina I."/>
            <person name="Rouleau G.A."/>
        </authorList>
    </citation>
    <scope>INVOLVEMENT IN EIG14</scope>
    <scope>VARIANTS EIG14 HIS-975 AND CYS-1072</scope>
    <scope>CHARACTERIZATION OF VARIANTS EIG14 HIS-975 AND CYS-1072</scope>
</reference>
<reference key="15">
    <citation type="journal article" date="2015" name="Front. Cell. Neurosci.">
        <title>Regulatory domain or CpG site variation in SLC12A5, encoding the chloride transporter KCC2, in human autism and schizophrenia.</title>
        <authorList>
            <person name="Merner N.D."/>
            <person name="Chandler M.R."/>
            <person name="Bourassa C."/>
            <person name="Liang B."/>
            <person name="Khanna A.R."/>
            <person name="Dion P."/>
            <person name="Rouleau G.A."/>
            <person name="Kahle K.T."/>
        </authorList>
    </citation>
    <scope>VARIANT TRP-1071</scope>
    <scope>VARIANTS EIG14 HIS-975 AND CYS-1072</scope>
</reference>
<name>S12A5_HUMAN</name>
<feature type="chain" id="PRO_0000178034" description="Solute carrier family 12 member 5">
    <location>
        <begin position="1"/>
        <end position="1139"/>
    </location>
</feature>
<feature type="topological domain" description="Cytoplasmic" evidence="14 21">
    <location>
        <begin position="1"/>
        <end position="98"/>
    </location>
</feature>
<feature type="transmembrane region" description="Discontinuously helical; Name=1" evidence="14 21">
    <location>
        <begin position="99"/>
        <end position="120"/>
    </location>
</feature>
<feature type="topological domain" description="Extracellular" evidence="14 21">
    <location>
        <begin position="121"/>
        <end position="129"/>
    </location>
</feature>
<feature type="transmembrane region" description="Helical; Name=2" evidence="14 21">
    <location>
        <begin position="130"/>
        <end position="151"/>
    </location>
</feature>
<feature type="topological domain" description="Cytoplasmic" evidence="14 21">
    <location>
        <begin position="152"/>
        <end position="174"/>
    </location>
</feature>
<feature type="transmembrane region" description="Helical; Name=3" evidence="14 21">
    <location>
        <begin position="175"/>
        <end position="203"/>
    </location>
</feature>
<feature type="topological domain" description="Extracellular" evidence="14 21">
    <location>
        <begin position="204"/>
        <end position="229"/>
    </location>
</feature>
<feature type="transmembrane region" description="Helical; Name=4" evidence="14 21">
    <location>
        <begin position="230"/>
        <end position="250"/>
    </location>
</feature>
<feature type="transmembrane region" description="Helical; Name=5" evidence="14 21">
    <location>
        <begin position="251"/>
        <end position="276"/>
    </location>
</feature>
<feature type="topological domain" description="Extracellular" evidence="14 21">
    <location>
        <begin position="277"/>
        <end position="402"/>
    </location>
</feature>
<feature type="transmembrane region" description="Helical; Name=6" evidence="14 21">
    <location>
        <begin position="403"/>
        <end position="420"/>
    </location>
</feature>
<feature type="topological domain" description="Cytoplasmic" evidence="14 21">
    <location>
        <begin position="421"/>
        <end position="429"/>
    </location>
</feature>
<feature type="transmembrane region" description="Helical; Name=7" evidence="14 21">
    <location>
        <begin position="430"/>
        <end position="453"/>
    </location>
</feature>
<feature type="topological domain" description="Extracellular" evidence="14 21">
    <location>
        <begin position="454"/>
        <end position="485"/>
    </location>
</feature>
<feature type="transmembrane region" description="Helical; Name=8" evidence="14 21">
    <location>
        <begin position="486"/>
        <end position="513"/>
    </location>
</feature>
<feature type="topological domain" description="Cytoplasmic" evidence="14 21">
    <location>
        <begin position="514"/>
        <end position="534"/>
    </location>
</feature>
<feature type="transmembrane region" description="Helical; Name=9" evidence="14 21">
    <location>
        <begin position="535"/>
        <end position="555"/>
    </location>
</feature>
<feature type="transmembrane region" description="Helical; Name=10" evidence="14 21">
    <location>
        <begin position="556"/>
        <end position="578"/>
    </location>
</feature>
<feature type="topological domain" description="Cytoplasmic" evidence="14 21">
    <location>
        <begin position="579"/>
        <end position="592"/>
    </location>
</feature>
<feature type="transmembrane region" description="Helical; Name=11" evidence="14 21">
    <location>
        <begin position="593"/>
        <end position="615"/>
    </location>
</feature>
<feature type="transmembrane region" description="Helical; Name=12" evidence="14 21">
    <location>
        <begin position="616"/>
        <end position="632"/>
    </location>
</feature>
<feature type="topological domain" description="Cytoplasmic" evidence="15 21">
    <location>
        <begin position="633"/>
        <end position="1139"/>
    </location>
</feature>
<feature type="region of interest" description="Disordered" evidence="4">
    <location>
        <begin position="1"/>
        <end position="63"/>
    </location>
</feature>
<feature type="region of interest" description="Disordered" evidence="4">
    <location>
        <begin position="92"/>
        <end position="116"/>
    </location>
</feature>
<feature type="region of interest" description="Scissor helix" evidence="14 15 21 22">
    <location>
        <begin position="667"/>
        <end position="681"/>
    </location>
</feature>
<feature type="region of interest" description="Disordered" evidence="4">
    <location>
        <begin position="942"/>
        <end position="1052"/>
    </location>
</feature>
<feature type="compositionally biased region" description="Basic and acidic residues" evidence="4">
    <location>
        <begin position="19"/>
        <end position="45"/>
    </location>
</feature>
<feature type="compositionally biased region" description="Polar residues" evidence="4">
    <location>
        <begin position="46"/>
        <end position="55"/>
    </location>
</feature>
<feature type="compositionally biased region" description="Basic and acidic residues" evidence="4">
    <location>
        <begin position="98"/>
        <end position="111"/>
    </location>
</feature>
<feature type="compositionally biased region" description="Basic and acidic residues" evidence="4">
    <location>
        <begin position="945"/>
        <end position="962"/>
    </location>
</feature>
<feature type="compositionally biased region" description="Acidic residues" evidence="4">
    <location>
        <begin position="982"/>
        <end position="994"/>
    </location>
</feature>
<feature type="compositionally biased region" description="Low complexity" evidence="4">
    <location>
        <begin position="1003"/>
        <end position="1012"/>
    </location>
</feature>
<feature type="compositionally biased region" description="Basic and acidic residues" evidence="4">
    <location>
        <begin position="1023"/>
        <end position="1042"/>
    </location>
</feature>
<feature type="binding site" evidence="15 21">
    <location>
        <position position="113"/>
    </location>
    <ligand>
        <name>K(+)</name>
        <dbReference type="ChEBI" id="CHEBI:29103"/>
    </ligand>
</feature>
<feature type="binding site" evidence="15 21">
    <location>
        <position position="184"/>
    </location>
    <ligand>
        <name>chloride</name>
        <dbReference type="ChEBI" id="CHEBI:17996"/>
    </ligand>
</feature>
<feature type="binding site" evidence="15 21">
    <location>
        <position position="410"/>
    </location>
    <ligand>
        <name>K(+)</name>
        <dbReference type="ChEBI" id="CHEBI:29103"/>
    </ligand>
</feature>
<feature type="binding site" evidence="15 21">
    <location>
        <position position="414"/>
    </location>
    <ligand>
        <name>chloride</name>
        <dbReference type="ChEBI" id="CHEBI:17996"/>
    </ligand>
</feature>
<feature type="binding site" evidence="15 21">
    <location>
        <position position="415"/>
    </location>
    <ligand>
        <name>chloride</name>
        <dbReference type="ChEBI" id="CHEBI:17996"/>
    </ligand>
</feature>
<feature type="binding site" evidence="15 21">
    <location>
        <position position="446"/>
    </location>
    <ligand>
        <name>K(+)</name>
        <dbReference type="ChEBI" id="CHEBI:29103"/>
    </ligand>
</feature>
<feature type="binding site" evidence="15 21">
    <location>
        <position position="569"/>
    </location>
    <ligand>
        <name>chloride</name>
        <dbReference type="ChEBI" id="CHEBI:17996"/>
    </ligand>
</feature>
<feature type="modified residue" description="Phosphothreonine" evidence="1">
    <location>
        <position position="57"/>
    </location>
</feature>
<feature type="modified residue" description="Phosphothreonine; by OXSR1 and STK39" evidence="8">
    <location>
        <position position="929"/>
    </location>
</feature>
<feature type="modified residue" description="Phosphothreonine; by OXSR1 and STK39" evidence="8">
    <location>
        <position position="1030"/>
    </location>
</feature>
<feature type="modified residue" description="Phosphoserine" evidence="2">
    <location>
        <position position="1045"/>
    </location>
</feature>
<feature type="modified residue" description="Phosphoserine" evidence="2">
    <location>
        <position position="1048"/>
    </location>
</feature>
<feature type="modified residue" description="Phosphoserine" evidence="2">
    <location>
        <position position="1049"/>
    </location>
</feature>
<feature type="glycosylation site" description="N-linked (GlcNAc...) asparagine" evidence="3">
    <location>
        <position position="314"/>
    </location>
</feature>
<feature type="glycosylation site" description="N-linked (GlcNAc...) asparagine" evidence="3">
    <location>
        <position position="333"/>
    </location>
</feature>
<feature type="glycosylation site" description="N-linked (GlcNAc...) asparagine" evidence="3">
    <location>
        <position position="351"/>
    </location>
</feature>
<feature type="glycosylation site" description="N-linked (GlcNAc...) asparagine" evidence="3">
    <location>
        <position position="362"/>
    </location>
</feature>
<feature type="disulfide bond" evidence="22">
    <location>
        <begin position="310"/>
        <end position="325"/>
    </location>
</feature>
<feature type="disulfide bond" evidence="21 22">
    <location>
        <begin position="345"/>
        <end position="354"/>
    </location>
</feature>
<feature type="splice variant" id="VSP_029909" description="In isoform 2." evidence="16 17 18">
    <original>MSRRFTVTSLPPAGPARSPDPESRRHSVADPRHLPGEDVK</original>
    <variation>MLNNLTDCEDGDGGANP</variation>
    <location>
        <begin position="1"/>
        <end position="40"/>
    </location>
</feature>
<feature type="sequence variant" id="VAR_075078" description="In DEE34; results in reduced chloride transport; decreased localization at the cell surface; dbSNP:rs863225306." evidence="12">
    <original>L</original>
    <variation>H</variation>
    <location>
        <position position="311"/>
    </location>
</feature>
<feature type="sequence variant" id="VAR_027414" description="In dbSNP:rs16985442.">
    <original>P</original>
    <variation>A</variation>
    <location>
        <position position="407"/>
    </location>
</feature>
<feature type="sequence variant" id="VAR_075079" description="In DEE34; results in loss of chloride transport; decreased localization at the cell surface; dbSNP:rs863225304." evidence="12">
    <original>L</original>
    <variation>P</variation>
    <location>
        <position position="426"/>
    </location>
</feature>
<feature type="sequence variant" id="VAR_075080" description="In DEE34; results in loss of chloride transport; decreased localization at the cell surface; dbSNP:rs863225305." evidence="12">
    <original>G</original>
    <variation>D</variation>
    <location>
        <position position="551"/>
    </location>
</feature>
<feature type="sequence variant" id="VAR_036557" description="In a colorectal cancer sample; somatic mutation." evidence="7">
    <original>G</original>
    <variation>D</variation>
    <location>
        <position position="847"/>
    </location>
</feature>
<feature type="sequence variant" id="VAR_075081" description="In EIG14; rare variant associated with disease susceptibility; results in reduced chloride transport; decreased localization at the cell surface; unable to induce cortical dendritic spines formation; dbSNP:rs142740233." evidence="10 11 13">
    <original>R</original>
    <variation>H</variation>
    <location>
        <position position="975"/>
    </location>
</feature>
<feature type="sequence variant" id="VAR_075082" description="In dbSNP:rs369042030." evidence="13">
    <original>R</original>
    <variation>W</variation>
    <location>
        <position position="1071"/>
    </location>
</feature>
<feature type="sequence variant" id="VAR_075083" description="In EIG14; rare variant associated with disease susceptibility; results in reduced chloride transport; dbSNP:rs548424453." evidence="11 13">
    <original>R</original>
    <variation>C</variation>
    <location>
        <position position="1072"/>
    </location>
</feature>
<feature type="sequence variant" id="VAR_024994" description="In dbSNP:rs17297532." evidence="5">
    <original>P</original>
    <variation>L</variation>
    <location>
        <position position="1100"/>
    </location>
</feature>
<feature type="mutagenesis site" description="2-fold increase in K(+) influx." evidence="15">
    <original>Y</original>
    <variation>A</variation>
    <location>
        <position position="91"/>
    </location>
</feature>
<feature type="mutagenesis site" description="2-fold increase in K(+) influx." evidence="15">
    <original>T</original>
    <variation>E</variation>
    <location>
        <position position="92"/>
    </location>
</feature>
<feature type="mutagenesis site" description="2-fold increase in K(+) influx." evidence="15">
    <original>N</original>
    <variation>A</variation>
    <location>
        <position position="93"/>
    </location>
</feature>
<feature type="mutagenesis site" description="3-fold increase in K(+) influx." evidence="15">
    <original>L</original>
    <variation>A</variation>
    <location>
        <position position="94"/>
    </location>
</feature>
<feature type="mutagenesis site" description="3-fold increase in K(+) influx." evidence="15">
    <original>Q</original>
    <variation>A</variation>
    <location>
        <position position="96"/>
    </location>
</feature>
<feature type="mutagenesis site" description="2-fold increase in K(+) influx." evidence="15">
    <original>H</original>
    <variation>A</variation>
    <location>
        <position position="101"/>
    </location>
</feature>
<feature type="mutagenesis site" description="3-fold increase in K(+) influx; when associated with A-105." evidence="15">
    <original>E</original>
    <variation>A</variation>
    <location>
        <position position="102"/>
    </location>
</feature>
<feature type="mutagenesis site" description="3-fold increase in K(+) influx; when associated with A-102." evidence="15">
    <original>E</original>
    <variation>A</variation>
    <location>
        <position position="105"/>
    </location>
</feature>
<feature type="mutagenesis site" description="Decreased phosphorylation by WNK kinases, leading to increased potassium-chloride cotransport activity; when associated with A-1030." evidence="8">
    <original>T</original>
    <variation>A</variation>
    <location>
        <position position="929"/>
    </location>
</feature>
<feature type="mutagenesis site" description="Decreased phosphorylation by WNK kinases, leading to increased potassium-chloride cotransport activity; when associated with A-929." evidence="8">
    <original>T</original>
    <variation>A</variation>
    <location>
        <position position="1030"/>
    </location>
</feature>
<feature type="helix" evidence="24">
    <location>
        <begin position="82"/>
        <end position="88"/>
    </location>
</feature>
<feature type="helix" evidence="23">
    <location>
        <begin position="99"/>
        <end position="102"/>
    </location>
</feature>
<feature type="helix" evidence="23">
    <location>
        <begin position="103"/>
        <end position="105"/>
    </location>
</feature>
<feature type="helix" evidence="23">
    <location>
        <begin position="122"/>
        <end position="125"/>
    </location>
</feature>
<feature type="helix" evidence="23">
    <location>
        <begin position="127"/>
        <end position="133"/>
    </location>
</feature>
<feature type="helix" evidence="23">
    <location>
        <begin position="137"/>
        <end position="141"/>
    </location>
</feature>
<feature type="helix" evidence="23">
    <location>
        <begin position="143"/>
        <end position="149"/>
    </location>
</feature>
<feature type="turn" evidence="23">
    <location>
        <begin position="152"/>
        <end position="154"/>
    </location>
</feature>
<feature type="turn" evidence="23">
    <location>
        <begin position="156"/>
        <end position="162"/>
    </location>
</feature>
<feature type="helix" evidence="23">
    <location>
        <begin position="163"/>
        <end position="177"/>
    </location>
</feature>
<feature type="helix" evidence="23">
    <location>
        <begin position="188"/>
        <end position="191"/>
    </location>
</feature>
<feature type="turn" evidence="23">
    <location>
        <begin position="192"/>
        <end position="194"/>
    </location>
</feature>
<feature type="helix" evidence="23">
    <location>
        <begin position="198"/>
        <end position="201"/>
    </location>
</feature>
<feature type="helix" evidence="23">
    <location>
        <begin position="203"/>
        <end position="228"/>
    </location>
</feature>
<feature type="strand" evidence="23">
    <location>
        <begin position="241"/>
        <end position="243"/>
    </location>
</feature>
<feature type="helix" evidence="23">
    <location>
        <begin position="245"/>
        <end position="270"/>
    </location>
</feature>
<feature type="helix" evidence="23">
    <location>
        <begin position="272"/>
        <end position="277"/>
    </location>
</feature>
<feature type="helix" evidence="23">
    <location>
        <begin position="279"/>
        <end position="299"/>
    </location>
</feature>
<feature type="turn" evidence="23">
    <location>
        <begin position="300"/>
        <end position="302"/>
    </location>
</feature>
<feature type="strand" evidence="23">
    <location>
        <begin position="308"/>
        <end position="314"/>
    </location>
</feature>
<feature type="strand" evidence="23">
    <location>
        <begin position="326"/>
        <end position="328"/>
    </location>
</feature>
<feature type="strand" evidence="23">
    <location>
        <begin position="332"/>
        <end position="334"/>
    </location>
</feature>
<feature type="helix" evidence="23">
    <location>
        <begin position="341"/>
        <end position="344"/>
    </location>
</feature>
<feature type="strand" evidence="23">
    <location>
        <begin position="348"/>
        <end position="352"/>
    </location>
</feature>
<feature type="helix" evidence="23">
    <location>
        <begin position="356"/>
        <end position="359"/>
    </location>
</feature>
<feature type="strand" evidence="23">
    <location>
        <begin position="364"/>
        <end position="369"/>
    </location>
</feature>
<feature type="turn" evidence="23">
    <location>
        <begin position="371"/>
        <end position="373"/>
    </location>
</feature>
<feature type="helix" evidence="23">
    <location>
        <begin position="378"/>
        <end position="380"/>
    </location>
</feature>
<feature type="strand" evidence="23">
    <location>
        <begin position="395"/>
        <end position="397"/>
    </location>
</feature>
<feature type="strand" evidence="23">
    <location>
        <begin position="412"/>
        <end position="414"/>
    </location>
</feature>
<feature type="helix" evidence="23">
    <location>
        <begin position="423"/>
        <end position="430"/>
    </location>
</feature>
<feature type="helix" evidence="23">
    <location>
        <begin position="431"/>
        <end position="433"/>
    </location>
</feature>
<feature type="helix" evidence="23">
    <location>
        <begin position="437"/>
        <end position="441"/>
    </location>
</feature>
<feature type="strand" evidence="23">
    <location>
        <begin position="442"/>
        <end position="446"/>
    </location>
</feature>
<feature type="helix" evidence="23">
    <location>
        <begin position="450"/>
        <end position="463"/>
    </location>
</feature>
<feature type="helix" evidence="23">
    <location>
        <begin position="466"/>
        <end position="476"/>
    </location>
</feature>
<feature type="turn" evidence="23">
    <location>
        <begin position="477"/>
        <end position="479"/>
    </location>
</feature>
<feature type="helix" evidence="23">
    <location>
        <begin position="482"/>
        <end position="485"/>
    </location>
</feature>
<feature type="turn" evidence="23">
    <location>
        <begin position="489"/>
        <end position="495"/>
    </location>
</feature>
<feature type="helix" evidence="23">
    <location>
        <begin position="500"/>
        <end position="502"/>
    </location>
</feature>
<feature type="strand" evidence="23">
    <location>
        <begin position="503"/>
        <end position="505"/>
    </location>
</feature>
<feature type="helix" evidence="23">
    <location>
        <begin position="508"/>
        <end position="520"/>
    </location>
</feature>
<feature type="turn" evidence="23">
    <location>
        <begin position="521"/>
        <end position="524"/>
    </location>
</feature>
<feature type="helix" evidence="23">
    <location>
        <begin position="525"/>
        <end position="538"/>
    </location>
</feature>
<feature type="helix" evidence="23">
    <location>
        <begin position="543"/>
        <end position="549"/>
    </location>
</feature>
<feature type="strand" evidence="23">
    <location>
        <begin position="555"/>
        <end position="558"/>
    </location>
</feature>
<feature type="helix" evidence="23">
    <location>
        <begin position="559"/>
        <end position="567"/>
    </location>
</feature>
<feature type="helix" evidence="23">
    <location>
        <begin position="569"/>
        <end position="571"/>
    </location>
</feature>
<feature type="turn" evidence="23">
    <location>
        <begin position="572"/>
        <end position="574"/>
    </location>
</feature>
<feature type="turn" evidence="23">
    <location>
        <begin position="577"/>
        <end position="579"/>
    </location>
</feature>
<feature type="helix" evidence="23">
    <location>
        <begin position="581"/>
        <end position="605"/>
    </location>
</feature>
<feature type="strand" evidence="23">
    <location>
        <begin position="614"/>
        <end position="616"/>
    </location>
</feature>
<feature type="turn" evidence="23">
    <location>
        <begin position="618"/>
        <end position="620"/>
    </location>
</feature>
<feature type="helix" evidence="23">
    <location>
        <begin position="621"/>
        <end position="634"/>
    </location>
</feature>
<feature type="helix" evidence="23">
    <location>
        <begin position="638"/>
        <end position="644"/>
    </location>
</feature>
<feature type="helix" evidence="23">
    <location>
        <begin position="646"/>
        <end position="663"/>
    </location>
</feature>
<feature type="strand" evidence="24">
    <location>
        <begin position="664"/>
        <end position="666"/>
    </location>
</feature>
<feature type="helix" evidence="23">
    <location>
        <begin position="667"/>
        <end position="681"/>
    </location>
</feature>
<feature type="strand" evidence="23">
    <location>
        <begin position="685"/>
        <end position="687"/>
    </location>
</feature>
<feature type="strand" evidence="24">
    <location>
        <begin position="688"/>
        <end position="691"/>
    </location>
</feature>
<feature type="strand" evidence="23">
    <location>
        <begin position="698"/>
        <end position="700"/>
    </location>
</feature>
<feature type="helix" evidence="23">
    <location>
        <begin position="713"/>
        <end position="722"/>
    </location>
</feature>
<feature type="strand" evidence="23">
    <location>
        <begin position="729"/>
        <end position="736"/>
    </location>
</feature>
<feature type="helix" evidence="23">
    <location>
        <begin position="738"/>
        <end position="741"/>
    </location>
</feature>
<feature type="helix" evidence="23">
    <location>
        <begin position="743"/>
        <end position="756"/>
    </location>
</feature>
<feature type="turn" evidence="23">
    <location>
        <begin position="757"/>
        <end position="760"/>
    </location>
</feature>
<feature type="strand" evidence="23">
    <location>
        <begin position="763"/>
        <end position="772"/>
    </location>
</feature>
<feature type="helix" evidence="23">
    <location>
        <begin position="773"/>
        <end position="782"/>
    </location>
</feature>
<feature type="strand" evidence="23">
    <location>
        <begin position="793"/>
        <end position="796"/>
    </location>
</feature>
<feature type="strand" evidence="23">
    <location>
        <begin position="803"/>
        <end position="806"/>
    </location>
</feature>
<feature type="turn" evidence="23">
    <location>
        <begin position="808"/>
        <end position="810"/>
    </location>
</feature>
<feature type="helix" evidence="23">
    <location>
        <begin position="812"/>
        <end position="823"/>
    </location>
</feature>
<feature type="strand" evidence="23">
    <location>
        <begin position="827"/>
        <end position="832"/>
    </location>
</feature>
<feature type="helix" evidence="23">
    <location>
        <begin position="834"/>
        <end position="836"/>
    </location>
</feature>
<feature type="strand" evidence="23">
    <location>
        <begin position="850"/>
        <end position="852"/>
    </location>
</feature>
<feature type="strand" evidence="23">
    <location>
        <begin position="854"/>
        <end position="856"/>
    </location>
</feature>
<feature type="helix" evidence="23">
    <location>
        <begin position="859"/>
        <end position="868"/>
    </location>
</feature>
<feature type="strand" evidence="23">
    <location>
        <begin position="871"/>
        <end position="876"/>
    </location>
</feature>
<feature type="strand" evidence="23">
    <location>
        <begin position="880"/>
        <end position="885"/>
    </location>
</feature>
<feature type="strand" evidence="23">
    <location>
        <begin position="887"/>
        <end position="889"/>
    </location>
</feature>
<feature type="helix" evidence="23">
    <location>
        <begin position="894"/>
        <end position="903"/>
    </location>
</feature>
<feature type="turn" evidence="23">
    <location>
        <begin position="904"/>
        <end position="906"/>
    </location>
</feature>
<feature type="strand" evidence="23">
    <location>
        <begin position="910"/>
        <end position="915"/>
    </location>
</feature>
<feature type="turn" evidence="23">
    <location>
        <begin position="923"/>
        <end position="927"/>
    </location>
</feature>
<feature type="helix" evidence="23">
    <location>
        <begin position="931"/>
        <end position="940"/>
    </location>
</feature>
<feature type="turn" evidence="23">
    <location>
        <begin position="946"/>
        <end position="948"/>
    </location>
</feature>
<feature type="strand" evidence="23">
    <location>
        <begin position="949"/>
        <end position="951"/>
    </location>
</feature>
<feature type="turn" evidence="23">
    <location>
        <begin position="953"/>
        <end position="957"/>
    </location>
</feature>
<feature type="helix" evidence="23">
    <location>
        <begin position="1078"/>
        <end position="1087"/>
    </location>
</feature>
<feature type="strand" evidence="23">
    <location>
        <begin position="1088"/>
        <end position="1091"/>
    </location>
</feature>
<feature type="strand" evidence="23">
    <location>
        <begin position="1093"/>
        <end position="1096"/>
    </location>
</feature>
<feature type="helix" evidence="23">
    <location>
        <begin position="1104"/>
        <end position="1106"/>
    </location>
</feature>
<feature type="turn" evidence="23">
    <location>
        <begin position="1107"/>
        <end position="1110"/>
    </location>
</feature>
<feature type="helix" evidence="23">
    <location>
        <begin position="1111"/>
        <end position="1117"/>
    </location>
</feature>
<feature type="turn" evidence="23">
    <location>
        <begin position="1118"/>
        <end position="1120"/>
    </location>
</feature>
<feature type="strand" evidence="23">
    <location>
        <begin position="1122"/>
        <end position="1128"/>
    </location>
</feature>
<feature type="sequence conflict" description="In Ref. 1; AAG43493." evidence="19" ref="1">
    <original>L</original>
    <variation>P</variation>
    <location sequence="Q9H2X9-2">
        <position position="2"/>
    </location>
</feature>
<accession>Q9H2X9</accession>
<accession>A2RTX2</accession>
<accession>Q5VZ41</accession>
<accession>Q9H4Z0</accession>
<accession>Q9ULP4</accession>
<evidence type="ECO:0000250" key="1">
    <source>
        <dbReference type="UniProtKB" id="Q63633"/>
    </source>
</evidence>
<evidence type="ECO:0000250" key="2">
    <source>
        <dbReference type="UniProtKB" id="Q91V14"/>
    </source>
</evidence>
<evidence type="ECO:0000255" key="3"/>
<evidence type="ECO:0000256" key="4">
    <source>
        <dbReference type="SAM" id="MobiDB-lite"/>
    </source>
</evidence>
<evidence type="ECO:0000269" key="5">
    <source>
    </source>
</evidence>
<evidence type="ECO:0000269" key="6">
    <source>
    </source>
</evidence>
<evidence type="ECO:0000269" key="7">
    <source>
    </source>
</evidence>
<evidence type="ECO:0000269" key="8">
    <source>
    </source>
</evidence>
<evidence type="ECO:0000269" key="9">
    <source>
    </source>
</evidence>
<evidence type="ECO:0000269" key="10">
    <source>
    </source>
</evidence>
<evidence type="ECO:0000269" key="11">
    <source>
    </source>
</evidence>
<evidence type="ECO:0000269" key="12">
    <source>
    </source>
</evidence>
<evidence type="ECO:0000269" key="13">
    <source>
    </source>
</evidence>
<evidence type="ECO:0000269" key="14">
    <source>
    </source>
</evidence>
<evidence type="ECO:0000269" key="15">
    <source>
    </source>
</evidence>
<evidence type="ECO:0000303" key="16">
    <source>
    </source>
</evidence>
<evidence type="ECO:0000303" key="17">
    <source>
    </source>
</evidence>
<evidence type="ECO:0000303" key="18">
    <source>
    </source>
</evidence>
<evidence type="ECO:0000305" key="19"/>
<evidence type="ECO:0000312" key="20">
    <source>
        <dbReference type="HGNC" id="HGNC:13818"/>
    </source>
</evidence>
<evidence type="ECO:0007744" key="21">
    <source>
        <dbReference type="PDB" id="6M23"/>
    </source>
</evidence>
<evidence type="ECO:0007744" key="22">
    <source>
        <dbReference type="PDB" id="7D8Z"/>
    </source>
</evidence>
<evidence type="ECO:0007829" key="23">
    <source>
        <dbReference type="PDB" id="6M23"/>
    </source>
</evidence>
<evidence type="ECO:0007829" key="24">
    <source>
        <dbReference type="PDB" id="7D8Z"/>
    </source>
</evidence>
<proteinExistence type="evidence at protein level"/>
<comment type="function">
    <text evidence="1 6 10">Mediates electroneutral potassium-chloride cotransport in mature neurons and is required for neuronal Cl(-) homeostasis (PubMed:12106695). As major extruder of intracellular chloride, it establishes the low neuronal Cl(-) levels required for chloride influx after binding of GABA-A and glycine to their receptors, with subsequent hyperpolarization and neuronal inhibition (By similarity). Involved in the regulation of dendritic spine formation and maturation (PubMed:24668262).</text>
</comment>
<comment type="catalytic activity">
    <reaction evidence="6">
        <text>K(+)(in) + chloride(in) = K(+)(out) + chloride(out)</text>
        <dbReference type="Rhea" id="RHEA:72427"/>
        <dbReference type="ChEBI" id="CHEBI:17996"/>
        <dbReference type="ChEBI" id="CHEBI:29103"/>
    </reaction>
</comment>
<comment type="activity regulation">
    <text evidence="8 9">Inhibited following phosphorylation by OXSR1/OSR1 and STK39/SPAK: phosphorylation takes place downstream of WNK kinases (WNK1, WNK2, WNK3 or WNK4) in response to hyperosmotic stress and subsequent cell shrinkage.</text>
</comment>
<comment type="biophysicochemical properties">
    <kinetics>
        <KM evidence="6">9.3 mM for Rb(+)</KM>
        <KM evidence="6">6.8 mM for chloride</KM>
    </kinetics>
</comment>
<comment type="subunit">
    <text evidence="2 14 15">Homodimer; adopts a domain-swap conformation at the scissor helices connecting the transmembrane domain and C-terminal domain (PubMed:33199848, PubMed:33310850). Heterodimer with K-Cl cotransporters SLC12A6 and SLC12A7 (PubMed:33310850). Interacts with AP2A1 (By similarity).</text>
</comment>
<comment type="subcellular location">
    <subcellularLocation>
        <location evidence="2">Cell membrane</location>
        <topology evidence="2">Multi-pass membrane protein</topology>
    </subcellularLocation>
    <subcellularLocation>
        <location evidence="2">Cell projection</location>
        <location evidence="2">Dendrite</location>
    </subcellularLocation>
    <text evidence="2">Detected on dendrites, but not on axons of spinal cord neurons and at GPHN-positive inhibitory synapses.</text>
</comment>
<comment type="alternative products">
    <event type="alternative splicing"/>
    <isoform>
        <id>Q9H2X9-1</id>
        <name>1</name>
        <name>KCC2a</name>
        <sequence type="displayed"/>
    </isoform>
    <isoform>
        <id>Q9H2X9-2</id>
        <name>2</name>
        <name>KCC2b</name>
        <sequence type="described" ref="VSP_029909"/>
    </isoform>
</comment>
<comment type="tissue specificity">
    <text evidence="6">Brain specific. Detected in neuronal cells.</text>
</comment>
<comment type="PTM">
    <text evidence="8">Phosphorylated at Thr-929 and Thr-1030 by OXSR1/OSR1 and STK39/SPAK downstream of WNK kinases (WNK1, WNK2, WNK3 or WNK4), inhibiting the potassium-chloride cotransport activity.</text>
</comment>
<comment type="disease" evidence="12">
    <disease id="DI-04577">
        <name>Developmental and epileptic encephalopathy 34</name>
        <acronym>DEE34</acronym>
        <description>A form of epileptic encephalopathy, a heterogeneous group of severe early-onset epilepsies characterized by refractory seizures, neurodevelopmental impairment, and poor prognosis. Development is normal prior to seizure onset, after which cognitive and motor delays become apparent. DEE34 is characterized by onset of refractory migrating focal seizures in infancy. Affected children show developmental regression and are severely impaired globally.</description>
        <dbReference type="MIM" id="616645"/>
    </disease>
    <text>The disease is caused by variants affecting the gene represented in this entry.</text>
</comment>
<comment type="disease" evidence="10 11 13">
    <disease id="DI-04596">
        <name>Epilepsy, idiopathic generalized 14</name>
        <acronym>EIG14</acronym>
        <description>An autosomal dominant form of idiopathic generalized epilepsy, a disorder characterized by recurring generalized seizures in the absence of detectable brain lesions and/or metabolic abnormalities. Generalized seizures arise diffusely and simultaneously from both hemispheres of the brain. Seizure types include juvenile myoclonic seizures, absence seizures, and generalized tonic-clonic seizures.</description>
        <dbReference type="MIM" id="616685"/>
    </disease>
    <text>Disease susceptibility is associated with variants affecting the gene represented in this entry.</text>
</comment>
<comment type="miscellaneous">
    <text>Inhibited by furosemide and bumetanide.</text>
</comment>
<comment type="similarity">
    <text evidence="19">Belongs to the SLC12A transporter family. K/Cl co-transporter subfamily.</text>
</comment>